<name>GLMS_IDILO</name>
<accession>Q5QZH5</accession>
<dbReference type="EC" id="2.6.1.16" evidence="1"/>
<dbReference type="EMBL" id="AE017340">
    <property type="protein sequence ID" value="AAV83448.1"/>
    <property type="molecule type" value="Genomic_DNA"/>
</dbReference>
<dbReference type="RefSeq" id="WP_011235839.1">
    <property type="nucleotide sequence ID" value="NC_006512.1"/>
</dbReference>
<dbReference type="SMR" id="Q5QZH5"/>
<dbReference type="STRING" id="283942.IL2616"/>
<dbReference type="GeneID" id="41337815"/>
<dbReference type="KEGG" id="ilo:IL2616"/>
<dbReference type="eggNOG" id="COG0449">
    <property type="taxonomic scope" value="Bacteria"/>
</dbReference>
<dbReference type="HOGENOM" id="CLU_012520_5_2_6"/>
<dbReference type="OrthoDB" id="9761808at2"/>
<dbReference type="Proteomes" id="UP000001171">
    <property type="component" value="Chromosome"/>
</dbReference>
<dbReference type="GO" id="GO:0005829">
    <property type="term" value="C:cytosol"/>
    <property type="evidence" value="ECO:0007669"/>
    <property type="project" value="TreeGrafter"/>
</dbReference>
<dbReference type="GO" id="GO:0097367">
    <property type="term" value="F:carbohydrate derivative binding"/>
    <property type="evidence" value="ECO:0007669"/>
    <property type="project" value="InterPro"/>
</dbReference>
<dbReference type="GO" id="GO:0004360">
    <property type="term" value="F:glutamine-fructose-6-phosphate transaminase (isomerizing) activity"/>
    <property type="evidence" value="ECO:0007669"/>
    <property type="project" value="UniProtKB-UniRule"/>
</dbReference>
<dbReference type="GO" id="GO:0005975">
    <property type="term" value="P:carbohydrate metabolic process"/>
    <property type="evidence" value="ECO:0007669"/>
    <property type="project" value="UniProtKB-UniRule"/>
</dbReference>
<dbReference type="GO" id="GO:0006002">
    <property type="term" value="P:fructose 6-phosphate metabolic process"/>
    <property type="evidence" value="ECO:0007669"/>
    <property type="project" value="TreeGrafter"/>
</dbReference>
<dbReference type="GO" id="GO:0006487">
    <property type="term" value="P:protein N-linked glycosylation"/>
    <property type="evidence" value="ECO:0007669"/>
    <property type="project" value="TreeGrafter"/>
</dbReference>
<dbReference type="GO" id="GO:0006047">
    <property type="term" value="P:UDP-N-acetylglucosamine metabolic process"/>
    <property type="evidence" value="ECO:0007669"/>
    <property type="project" value="TreeGrafter"/>
</dbReference>
<dbReference type="CDD" id="cd00714">
    <property type="entry name" value="GFAT"/>
    <property type="match status" value="1"/>
</dbReference>
<dbReference type="CDD" id="cd05008">
    <property type="entry name" value="SIS_GlmS_GlmD_1"/>
    <property type="match status" value="1"/>
</dbReference>
<dbReference type="CDD" id="cd05009">
    <property type="entry name" value="SIS_GlmS_GlmD_2"/>
    <property type="match status" value="1"/>
</dbReference>
<dbReference type="FunFam" id="3.40.50.10490:FF:000001">
    <property type="entry name" value="Glutamine--fructose-6-phosphate aminotransferase [isomerizing]"/>
    <property type="match status" value="1"/>
</dbReference>
<dbReference type="FunFam" id="3.60.20.10:FF:000006">
    <property type="entry name" value="Glutamine--fructose-6-phosphate aminotransferase [isomerizing]"/>
    <property type="match status" value="1"/>
</dbReference>
<dbReference type="Gene3D" id="3.40.50.10490">
    <property type="entry name" value="Glucose-6-phosphate isomerase like protein, domain 1"/>
    <property type="match status" value="2"/>
</dbReference>
<dbReference type="Gene3D" id="3.60.20.10">
    <property type="entry name" value="Glutamine Phosphoribosylpyrophosphate, subunit 1, domain 1"/>
    <property type="match status" value="1"/>
</dbReference>
<dbReference type="HAMAP" id="MF_00164">
    <property type="entry name" value="GlmS"/>
    <property type="match status" value="1"/>
</dbReference>
<dbReference type="InterPro" id="IPR017932">
    <property type="entry name" value="GATase_2_dom"/>
</dbReference>
<dbReference type="InterPro" id="IPR005855">
    <property type="entry name" value="GFAT"/>
</dbReference>
<dbReference type="InterPro" id="IPR047084">
    <property type="entry name" value="GFAT_N"/>
</dbReference>
<dbReference type="InterPro" id="IPR035466">
    <property type="entry name" value="GlmS/AgaS_SIS"/>
</dbReference>
<dbReference type="InterPro" id="IPR035490">
    <property type="entry name" value="GlmS/FrlB_SIS"/>
</dbReference>
<dbReference type="InterPro" id="IPR029055">
    <property type="entry name" value="Ntn_hydrolases_N"/>
</dbReference>
<dbReference type="InterPro" id="IPR001347">
    <property type="entry name" value="SIS_dom"/>
</dbReference>
<dbReference type="InterPro" id="IPR046348">
    <property type="entry name" value="SIS_dom_sf"/>
</dbReference>
<dbReference type="NCBIfam" id="TIGR01135">
    <property type="entry name" value="glmS"/>
    <property type="match status" value="1"/>
</dbReference>
<dbReference type="NCBIfam" id="NF001484">
    <property type="entry name" value="PRK00331.1"/>
    <property type="match status" value="1"/>
</dbReference>
<dbReference type="PANTHER" id="PTHR10937">
    <property type="entry name" value="GLUCOSAMINE--FRUCTOSE-6-PHOSPHATE AMINOTRANSFERASE, ISOMERIZING"/>
    <property type="match status" value="1"/>
</dbReference>
<dbReference type="PANTHER" id="PTHR10937:SF0">
    <property type="entry name" value="GLUTAMINE--FRUCTOSE-6-PHOSPHATE TRANSAMINASE (ISOMERIZING)"/>
    <property type="match status" value="1"/>
</dbReference>
<dbReference type="Pfam" id="PF13522">
    <property type="entry name" value="GATase_6"/>
    <property type="match status" value="1"/>
</dbReference>
<dbReference type="Pfam" id="PF01380">
    <property type="entry name" value="SIS"/>
    <property type="match status" value="2"/>
</dbReference>
<dbReference type="SUPFAM" id="SSF56235">
    <property type="entry name" value="N-terminal nucleophile aminohydrolases (Ntn hydrolases)"/>
    <property type="match status" value="1"/>
</dbReference>
<dbReference type="SUPFAM" id="SSF53697">
    <property type="entry name" value="SIS domain"/>
    <property type="match status" value="1"/>
</dbReference>
<dbReference type="PROSITE" id="PS51278">
    <property type="entry name" value="GATASE_TYPE_2"/>
    <property type="match status" value="1"/>
</dbReference>
<dbReference type="PROSITE" id="PS51464">
    <property type="entry name" value="SIS"/>
    <property type="match status" value="2"/>
</dbReference>
<feature type="initiator methionine" description="Removed" evidence="1">
    <location>
        <position position="1"/>
    </location>
</feature>
<feature type="chain" id="PRO_0000135342" description="Glutamine--fructose-6-phosphate aminotransferase [isomerizing]">
    <location>
        <begin position="2"/>
        <end position="610"/>
    </location>
</feature>
<feature type="domain" description="Glutamine amidotransferase type-2" evidence="1">
    <location>
        <begin position="2"/>
        <end position="219"/>
    </location>
</feature>
<feature type="domain" description="SIS 1" evidence="1">
    <location>
        <begin position="287"/>
        <end position="427"/>
    </location>
</feature>
<feature type="domain" description="SIS 2" evidence="1">
    <location>
        <begin position="459"/>
        <end position="600"/>
    </location>
</feature>
<feature type="active site" description="Nucleophile; for GATase activity" evidence="1">
    <location>
        <position position="2"/>
    </location>
</feature>
<feature type="active site" description="For Fru-6P isomerization activity" evidence="1">
    <location>
        <position position="605"/>
    </location>
</feature>
<proteinExistence type="inferred from homology"/>
<organism>
    <name type="scientific">Idiomarina loihiensis (strain ATCC BAA-735 / DSM 15497 / L2-TR)</name>
    <dbReference type="NCBI Taxonomy" id="283942"/>
    <lineage>
        <taxon>Bacteria</taxon>
        <taxon>Pseudomonadati</taxon>
        <taxon>Pseudomonadota</taxon>
        <taxon>Gammaproteobacteria</taxon>
        <taxon>Alteromonadales</taxon>
        <taxon>Idiomarinaceae</taxon>
        <taxon>Idiomarina</taxon>
    </lineage>
</organism>
<reference key="1">
    <citation type="journal article" date="2004" name="Proc. Natl. Acad. Sci. U.S.A.">
        <title>Genome sequence of the deep-sea gamma-proteobacterium Idiomarina loihiensis reveals amino acid fermentation as a source of carbon and energy.</title>
        <authorList>
            <person name="Hou S."/>
            <person name="Saw J.H."/>
            <person name="Lee K.S."/>
            <person name="Freitas T.A."/>
            <person name="Belisle C."/>
            <person name="Kawarabayasi Y."/>
            <person name="Donachie S.P."/>
            <person name="Pikina A."/>
            <person name="Galperin M.Y."/>
            <person name="Koonin E.V."/>
            <person name="Makarova K.S."/>
            <person name="Omelchenko M.V."/>
            <person name="Sorokin A."/>
            <person name="Wolf Y.I."/>
            <person name="Li Q.X."/>
            <person name="Keum Y.S."/>
            <person name="Campbell S."/>
            <person name="Denery J."/>
            <person name="Aizawa S."/>
            <person name="Shibata S."/>
            <person name="Malahoff A."/>
            <person name="Alam M."/>
        </authorList>
    </citation>
    <scope>NUCLEOTIDE SEQUENCE [LARGE SCALE GENOMIC DNA]</scope>
    <source>
        <strain>ATCC BAA-735 / DSM 15497 / L2-TR</strain>
    </source>
</reference>
<gene>
    <name evidence="1" type="primary">glmS</name>
    <name type="ordered locus">IL2616</name>
</gene>
<comment type="function">
    <text evidence="1">Catalyzes the first step in hexosamine metabolism, converting fructose-6P into glucosamine-6P using glutamine as a nitrogen source.</text>
</comment>
<comment type="catalytic activity">
    <reaction evidence="1">
        <text>D-fructose 6-phosphate + L-glutamine = D-glucosamine 6-phosphate + L-glutamate</text>
        <dbReference type="Rhea" id="RHEA:13237"/>
        <dbReference type="ChEBI" id="CHEBI:29985"/>
        <dbReference type="ChEBI" id="CHEBI:58359"/>
        <dbReference type="ChEBI" id="CHEBI:58725"/>
        <dbReference type="ChEBI" id="CHEBI:61527"/>
        <dbReference type="EC" id="2.6.1.16"/>
    </reaction>
</comment>
<comment type="subunit">
    <text evidence="1">Homodimer.</text>
</comment>
<comment type="subcellular location">
    <subcellularLocation>
        <location evidence="1">Cytoplasm</location>
    </subcellularLocation>
</comment>
<evidence type="ECO:0000255" key="1">
    <source>
        <dbReference type="HAMAP-Rule" id="MF_00164"/>
    </source>
</evidence>
<sequence length="610" mass="66853">MCGIVGATSERRVTGILLEGLKRLEYRGYDSAGVAVIDADNHLKSVRRTGKVQELKDAIEQNPLDGTIGIAHTRWATHGGVTEANAHPHRSEDEIAVVHNGIIENHERLREELQAEGYVFNSQTDTEVIAHLIHHERKTHGDLLAAVKSAVRQLEGAYGTVVMDTQYPERLVVARSGSPLVIGVGIGENFVASDQLALLPVTRQFIYLEEGDVADINRTEIDIYDSEGNAVEREVVESDVSYDAGGKGQYRHFMLKEIYEQPIAVRNTLEGRLSEISVLDNAFGENAADILKDIEHVQIVACGTSYHAGMVARYWLESMANVSCNVEIASEFRYRKSYVHPNSLLVTISQSGETADTLAALRLSKKLGYKGSLTICNVGSSSMVRESDLAFLTRAGAEIGVASTKAFTTQLTGLLMLTLGIGKYRGMPEQQQEAVVHALQALPTKLEEAVSLADEIEELAQDFANKEHSLFLGRGNQYPIAMEGALKLKEISYIHAEAYAAGELKHGPLALIDEEMPVIVVAPNNDLLEKLKSNVEEVRARGGLMYVFADKNARFKGDDSLTVLNVCHCDEVIAPIVYTVPLQLLSYYVALIKGTDVDQPRNLAKSVTVE</sequence>
<protein>
    <recommendedName>
        <fullName evidence="1">Glutamine--fructose-6-phosphate aminotransferase [isomerizing]</fullName>
        <ecNumber evidence="1">2.6.1.16</ecNumber>
    </recommendedName>
    <alternativeName>
        <fullName evidence="1">D-fructose-6-phosphate amidotransferase</fullName>
    </alternativeName>
    <alternativeName>
        <fullName evidence="1">GFAT</fullName>
    </alternativeName>
    <alternativeName>
        <fullName evidence="1">Glucosamine-6-phosphate synthase</fullName>
    </alternativeName>
    <alternativeName>
        <fullName evidence="1">Hexosephosphate aminotransferase</fullName>
    </alternativeName>
    <alternativeName>
        <fullName evidence="1">L-glutamine--D-fructose-6-phosphate amidotransferase</fullName>
    </alternativeName>
</protein>
<keyword id="KW-0032">Aminotransferase</keyword>
<keyword id="KW-0963">Cytoplasm</keyword>
<keyword id="KW-0315">Glutamine amidotransferase</keyword>
<keyword id="KW-1185">Reference proteome</keyword>
<keyword id="KW-0677">Repeat</keyword>
<keyword id="KW-0808">Transferase</keyword>